<name>TRPB2_CHLCV</name>
<evidence type="ECO:0000250" key="1"/>
<evidence type="ECO:0000305" key="2"/>
<sequence length="391" mass="42167">MKHPYPFGGQFMPEILMAPVQDLSNSWKSLQNHSDFKNELDSVLKNYAGRPTPLTEIKNFAKAIHGPRIFLKREDLLHTGAHKINNALGQCLLAKHLGKTRIIAETGAGQHGVATATACGCLGLECVIYMGAKDIERQKPNVDKMNLLGAEVISVNQGAQTLKDAVNEALRDWSKNYESTHYCLGSALGPSPYPEMVRNFQSVISLEVKSQLQEIGFSPDLLIACVGGGSNAIGFFHHFIPDTRVKLVGVEAGGLGIESGHHAARFATGRPGVLHGFYSYLLQDNEGQVLPTHSISAGLDYPAVGPDHAVLYESGRASYTVATDKAALEAFFLLSRLEGIIPALESSHALAELINIAPTLPKESVVVVNLSGRGDKDLEQITNLIKAGNNE</sequence>
<feature type="chain" id="PRO_0000098939" description="Tryptophan synthase beta chain 2">
    <location>
        <begin position="1"/>
        <end position="391"/>
    </location>
</feature>
<feature type="modified residue" description="N6-(pyridoxal phosphate)lysine" evidence="1">
    <location>
        <position position="83"/>
    </location>
</feature>
<keyword id="KW-0028">Amino-acid biosynthesis</keyword>
<keyword id="KW-0057">Aromatic amino acid biosynthesis</keyword>
<keyword id="KW-0456">Lyase</keyword>
<keyword id="KW-0663">Pyridoxal phosphate</keyword>
<keyword id="KW-0822">Tryptophan biosynthesis</keyword>
<reference key="1">
    <citation type="journal article" date="2003" name="Nucleic Acids Res.">
        <title>Genome sequence of Chlamydophila caviae (Chlamydia psittaci GPIC): examining the role of niche-specific genes in the evolution of the Chlamydiaceae.</title>
        <authorList>
            <person name="Read T.D."/>
            <person name="Myers G.S.A."/>
            <person name="Brunham R.C."/>
            <person name="Nelson W.C."/>
            <person name="Paulsen I.T."/>
            <person name="Heidelberg J.F."/>
            <person name="Holtzapple E.K."/>
            <person name="Khouri H.M."/>
            <person name="Federova N.B."/>
            <person name="Carty H.A."/>
            <person name="Umayam L.A."/>
            <person name="Haft D.H."/>
            <person name="Peterson J.D."/>
            <person name="Beanan M.J."/>
            <person name="White O."/>
            <person name="Salzberg S.L."/>
            <person name="Hsia R.-C."/>
            <person name="McClarty G."/>
            <person name="Rank R.G."/>
            <person name="Bavoil P.M."/>
            <person name="Fraser C.M."/>
        </authorList>
    </citation>
    <scope>NUCLEOTIDE SEQUENCE [LARGE SCALE GENOMIC DNA]</scope>
    <source>
        <strain>ATCC VR-813 / DSM 19441 / 03DC25 / GPIC</strain>
    </source>
</reference>
<comment type="function">
    <text evidence="1">The beta subunit is responsible for the synthesis of L-tryptophan from indole and L-serine.</text>
</comment>
<comment type="catalytic activity">
    <reaction>
        <text>(1S,2R)-1-C-(indol-3-yl)glycerol 3-phosphate + L-serine = D-glyceraldehyde 3-phosphate + L-tryptophan + H2O</text>
        <dbReference type="Rhea" id="RHEA:10532"/>
        <dbReference type="ChEBI" id="CHEBI:15377"/>
        <dbReference type="ChEBI" id="CHEBI:33384"/>
        <dbReference type="ChEBI" id="CHEBI:57912"/>
        <dbReference type="ChEBI" id="CHEBI:58866"/>
        <dbReference type="ChEBI" id="CHEBI:59776"/>
        <dbReference type="EC" id="4.2.1.20"/>
    </reaction>
</comment>
<comment type="cofactor">
    <cofactor evidence="1">
        <name>pyridoxal 5'-phosphate</name>
        <dbReference type="ChEBI" id="CHEBI:597326"/>
    </cofactor>
</comment>
<comment type="pathway">
    <text>Amino-acid biosynthesis; L-tryptophan biosynthesis; L-tryptophan from chorismate: step 5/5.</text>
</comment>
<comment type="subunit">
    <text evidence="1">Tetramer of two alpha and two beta chains.</text>
</comment>
<comment type="similarity">
    <text evidence="2">Belongs to the TrpB family.</text>
</comment>
<protein>
    <recommendedName>
        <fullName>Tryptophan synthase beta chain 2</fullName>
        <ecNumber>4.2.1.20</ecNumber>
    </recommendedName>
</protein>
<organism>
    <name type="scientific">Chlamydia caviae (strain ATCC VR-813 / DSM 19441 / 03DC25 / GPIC)</name>
    <name type="common">Chlamydophila caviae</name>
    <dbReference type="NCBI Taxonomy" id="227941"/>
    <lineage>
        <taxon>Bacteria</taxon>
        <taxon>Pseudomonadati</taxon>
        <taxon>Chlamydiota</taxon>
        <taxon>Chlamydiia</taxon>
        <taxon>Chlamydiales</taxon>
        <taxon>Chlamydiaceae</taxon>
        <taxon>Chlamydia/Chlamydophila group</taxon>
        <taxon>Chlamydia</taxon>
    </lineage>
</organism>
<gene>
    <name type="primary">trpB2</name>
    <name type="synonym">trpB-2</name>
    <name type="ordered locus">CCA_00566</name>
</gene>
<accession>Q822W3</accession>
<proteinExistence type="inferred from homology"/>
<dbReference type="EC" id="4.2.1.20"/>
<dbReference type="EMBL" id="AE015925">
    <property type="protein sequence ID" value="AAP05308.1"/>
    <property type="molecule type" value="Genomic_DNA"/>
</dbReference>
<dbReference type="RefSeq" id="WP_011006523.1">
    <property type="nucleotide sequence ID" value="NC_003361.3"/>
</dbReference>
<dbReference type="SMR" id="Q822W3"/>
<dbReference type="STRING" id="227941.CCA_00566"/>
<dbReference type="KEGG" id="cca:CCA_00566"/>
<dbReference type="eggNOG" id="COG0133">
    <property type="taxonomic scope" value="Bacteria"/>
</dbReference>
<dbReference type="HOGENOM" id="CLU_016734_3_1_0"/>
<dbReference type="OrthoDB" id="9766131at2"/>
<dbReference type="UniPathway" id="UPA00035">
    <property type="reaction ID" value="UER00044"/>
</dbReference>
<dbReference type="Proteomes" id="UP000002193">
    <property type="component" value="Chromosome"/>
</dbReference>
<dbReference type="GO" id="GO:0005737">
    <property type="term" value="C:cytoplasm"/>
    <property type="evidence" value="ECO:0007669"/>
    <property type="project" value="TreeGrafter"/>
</dbReference>
<dbReference type="GO" id="GO:0004834">
    <property type="term" value="F:tryptophan synthase activity"/>
    <property type="evidence" value="ECO:0007669"/>
    <property type="project" value="UniProtKB-UniRule"/>
</dbReference>
<dbReference type="CDD" id="cd06446">
    <property type="entry name" value="Trp-synth_B"/>
    <property type="match status" value="1"/>
</dbReference>
<dbReference type="FunFam" id="3.40.50.1100:FF:000001">
    <property type="entry name" value="Tryptophan synthase beta chain"/>
    <property type="match status" value="1"/>
</dbReference>
<dbReference type="FunFam" id="3.40.50.1100:FF:000004">
    <property type="entry name" value="Tryptophan synthase beta chain"/>
    <property type="match status" value="1"/>
</dbReference>
<dbReference type="Gene3D" id="3.40.50.1100">
    <property type="match status" value="2"/>
</dbReference>
<dbReference type="HAMAP" id="MF_00133">
    <property type="entry name" value="Trp_synth_beta"/>
    <property type="match status" value="1"/>
</dbReference>
<dbReference type="InterPro" id="IPR006653">
    <property type="entry name" value="Trp_synth_b_CS"/>
</dbReference>
<dbReference type="InterPro" id="IPR006654">
    <property type="entry name" value="Trp_synth_beta"/>
</dbReference>
<dbReference type="InterPro" id="IPR023026">
    <property type="entry name" value="Trp_synth_beta/beta-like"/>
</dbReference>
<dbReference type="InterPro" id="IPR001926">
    <property type="entry name" value="TrpB-like_PALP"/>
</dbReference>
<dbReference type="InterPro" id="IPR036052">
    <property type="entry name" value="TrpB-like_PALP_sf"/>
</dbReference>
<dbReference type="NCBIfam" id="TIGR00263">
    <property type="entry name" value="trpB"/>
    <property type="match status" value="1"/>
</dbReference>
<dbReference type="PANTHER" id="PTHR48077:SF3">
    <property type="entry name" value="TRYPTOPHAN SYNTHASE"/>
    <property type="match status" value="1"/>
</dbReference>
<dbReference type="PANTHER" id="PTHR48077">
    <property type="entry name" value="TRYPTOPHAN SYNTHASE-RELATED"/>
    <property type="match status" value="1"/>
</dbReference>
<dbReference type="Pfam" id="PF00291">
    <property type="entry name" value="PALP"/>
    <property type="match status" value="1"/>
</dbReference>
<dbReference type="PIRSF" id="PIRSF001413">
    <property type="entry name" value="Trp_syn_beta"/>
    <property type="match status" value="1"/>
</dbReference>
<dbReference type="SUPFAM" id="SSF53686">
    <property type="entry name" value="Tryptophan synthase beta subunit-like PLP-dependent enzymes"/>
    <property type="match status" value="1"/>
</dbReference>
<dbReference type="PROSITE" id="PS00168">
    <property type="entry name" value="TRP_SYNTHASE_BETA"/>
    <property type="match status" value="1"/>
</dbReference>